<organism>
    <name type="scientific">Pseudomonas entomophila (strain L48)</name>
    <dbReference type="NCBI Taxonomy" id="384676"/>
    <lineage>
        <taxon>Bacteria</taxon>
        <taxon>Pseudomonadati</taxon>
        <taxon>Pseudomonadota</taxon>
        <taxon>Gammaproteobacteria</taxon>
        <taxon>Pseudomonadales</taxon>
        <taxon>Pseudomonadaceae</taxon>
        <taxon>Pseudomonas</taxon>
    </lineage>
</organism>
<comment type="function">
    <text evidence="1">Hydrolyzes the pyrophosphate bond of UDP-2,3-diacylglucosamine to yield 2,3-diacylglucosamine 1-phosphate (lipid X) and UMP by catalyzing the attack of water at the alpha-P atom. Involved in the biosynthesis of lipid A, a phosphorylated glycolipid that anchors the lipopolysaccharide to the outer membrane of the cell.</text>
</comment>
<comment type="catalytic activity">
    <reaction evidence="1">
        <text>UDP-2-N,3-O-bis[(3R)-3-hydroxytetradecanoyl]-alpha-D-glucosamine + H2O = 2-N,3-O-bis[(3R)-3-hydroxytetradecanoyl]-alpha-D-glucosaminyl 1-phosphate + UMP + 2 H(+)</text>
        <dbReference type="Rhea" id="RHEA:25213"/>
        <dbReference type="ChEBI" id="CHEBI:15377"/>
        <dbReference type="ChEBI" id="CHEBI:15378"/>
        <dbReference type="ChEBI" id="CHEBI:57865"/>
        <dbReference type="ChEBI" id="CHEBI:57957"/>
        <dbReference type="ChEBI" id="CHEBI:78847"/>
        <dbReference type="EC" id="3.6.1.54"/>
    </reaction>
</comment>
<comment type="cofactor">
    <cofactor evidence="1">
        <name>Mn(2+)</name>
        <dbReference type="ChEBI" id="CHEBI:29035"/>
    </cofactor>
    <text evidence="1">Binds 2 Mn(2+) ions per subunit in a binuclear metal center.</text>
</comment>
<comment type="pathway">
    <text evidence="1">Glycolipid biosynthesis; lipid IV(A) biosynthesis; lipid IV(A) from (3R)-3-hydroxytetradecanoyl-[acyl-carrier-protein] and UDP-N-acetyl-alpha-D-glucosamine: step 4/6.</text>
</comment>
<comment type="subcellular location">
    <subcellularLocation>
        <location evidence="1">Cell inner membrane</location>
        <topology evidence="1">Peripheral membrane protein</topology>
        <orientation evidence="1">Cytoplasmic side</orientation>
    </subcellularLocation>
</comment>
<comment type="similarity">
    <text evidence="1">Belongs to the LpxH family.</text>
</comment>
<evidence type="ECO:0000255" key="1">
    <source>
        <dbReference type="HAMAP-Rule" id="MF_00575"/>
    </source>
</evidence>
<proteinExistence type="inferred from homology"/>
<feature type="chain" id="PRO_1000025070" description="UDP-2,3-diacylglucosamine hydrolase">
    <location>
        <begin position="1"/>
        <end position="240"/>
    </location>
</feature>
<feature type="binding site" evidence="1">
    <location>
        <position position="7"/>
    </location>
    <ligand>
        <name>Mn(2+)</name>
        <dbReference type="ChEBI" id="CHEBI:29035"/>
        <label>1</label>
    </ligand>
</feature>
<feature type="binding site" evidence="1">
    <location>
        <position position="9"/>
    </location>
    <ligand>
        <name>Mn(2+)</name>
        <dbReference type="ChEBI" id="CHEBI:29035"/>
        <label>1</label>
    </ligand>
</feature>
<feature type="binding site" evidence="1">
    <location>
        <position position="40"/>
    </location>
    <ligand>
        <name>Mn(2+)</name>
        <dbReference type="ChEBI" id="CHEBI:29035"/>
        <label>1</label>
    </ligand>
</feature>
<feature type="binding site" evidence="1">
    <location>
        <position position="40"/>
    </location>
    <ligand>
        <name>Mn(2+)</name>
        <dbReference type="ChEBI" id="CHEBI:29035"/>
        <label>2</label>
    </ligand>
</feature>
<feature type="binding site" evidence="1">
    <location>
        <begin position="78"/>
        <end position="79"/>
    </location>
    <ligand>
        <name>substrate</name>
    </ligand>
</feature>
<feature type="binding site" evidence="1">
    <location>
        <position position="78"/>
    </location>
    <ligand>
        <name>Mn(2+)</name>
        <dbReference type="ChEBI" id="CHEBI:29035"/>
        <label>2</label>
    </ligand>
</feature>
<feature type="binding site" evidence="1">
    <location>
        <position position="113"/>
    </location>
    <ligand>
        <name>Mn(2+)</name>
        <dbReference type="ChEBI" id="CHEBI:29035"/>
        <label>2</label>
    </ligand>
</feature>
<feature type="binding site" evidence="1">
    <location>
        <position position="121"/>
    </location>
    <ligand>
        <name>substrate</name>
    </ligand>
</feature>
<feature type="binding site" evidence="1">
    <location>
        <position position="159"/>
    </location>
    <ligand>
        <name>substrate</name>
    </ligand>
</feature>
<feature type="binding site" evidence="1">
    <location>
        <position position="163"/>
    </location>
    <ligand>
        <name>substrate</name>
    </ligand>
</feature>
<feature type="binding site" evidence="1">
    <location>
        <position position="166"/>
    </location>
    <ligand>
        <name>substrate</name>
    </ligand>
</feature>
<feature type="binding site" evidence="1">
    <location>
        <position position="194"/>
    </location>
    <ligand>
        <name>Mn(2+)</name>
        <dbReference type="ChEBI" id="CHEBI:29035"/>
        <label>2</label>
    </ligand>
</feature>
<feature type="binding site" evidence="1">
    <location>
        <position position="194"/>
    </location>
    <ligand>
        <name>substrate</name>
    </ligand>
</feature>
<feature type="binding site" evidence="1">
    <location>
        <position position="196"/>
    </location>
    <ligand>
        <name>Mn(2+)</name>
        <dbReference type="ChEBI" id="CHEBI:29035"/>
        <label>1</label>
    </ligand>
</feature>
<accession>Q1IBQ2</accession>
<gene>
    <name evidence="1" type="primary">lpxH</name>
    <name type="ordered locus">PSEEN2084</name>
</gene>
<dbReference type="EC" id="3.6.1.54" evidence="1"/>
<dbReference type="EMBL" id="CT573326">
    <property type="protein sequence ID" value="CAK14913.1"/>
    <property type="molecule type" value="Genomic_DNA"/>
</dbReference>
<dbReference type="RefSeq" id="WP_011533316.1">
    <property type="nucleotide sequence ID" value="NC_008027.1"/>
</dbReference>
<dbReference type="SMR" id="Q1IBQ2"/>
<dbReference type="STRING" id="384676.PSEEN2084"/>
<dbReference type="GeneID" id="32805292"/>
<dbReference type="KEGG" id="pen:PSEEN2084"/>
<dbReference type="eggNOG" id="COG2908">
    <property type="taxonomic scope" value="Bacteria"/>
</dbReference>
<dbReference type="HOGENOM" id="CLU_074586_0_0_6"/>
<dbReference type="OrthoDB" id="9783283at2"/>
<dbReference type="UniPathway" id="UPA00359">
    <property type="reaction ID" value="UER00480"/>
</dbReference>
<dbReference type="Proteomes" id="UP000000658">
    <property type="component" value="Chromosome"/>
</dbReference>
<dbReference type="GO" id="GO:0005737">
    <property type="term" value="C:cytoplasm"/>
    <property type="evidence" value="ECO:0007669"/>
    <property type="project" value="InterPro"/>
</dbReference>
<dbReference type="GO" id="GO:0019897">
    <property type="term" value="C:extrinsic component of plasma membrane"/>
    <property type="evidence" value="ECO:0007669"/>
    <property type="project" value="UniProtKB-UniRule"/>
</dbReference>
<dbReference type="GO" id="GO:0030145">
    <property type="term" value="F:manganese ion binding"/>
    <property type="evidence" value="ECO:0007669"/>
    <property type="project" value="UniProtKB-UniRule"/>
</dbReference>
<dbReference type="GO" id="GO:0008758">
    <property type="term" value="F:UDP-2,3-diacylglucosamine hydrolase activity"/>
    <property type="evidence" value="ECO:0007669"/>
    <property type="project" value="UniProtKB-UniRule"/>
</dbReference>
<dbReference type="GO" id="GO:0009245">
    <property type="term" value="P:lipid A biosynthetic process"/>
    <property type="evidence" value="ECO:0007669"/>
    <property type="project" value="UniProtKB-UniRule"/>
</dbReference>
<dbReference type="CDD" id="cd07398">
    <property type="entry name" value="MPP_YbbF-LpxH"/>
    <property type="match status" value="1"/>
</dbReference>
<dbReference type="Gene3D" id="3.60.21.10">
    <property type="match status" value="1"/>
</dbReference>
<dbReference type="HAMAP" id="MF_00575">
    <property type="entry name" value="LpxH"/>
    <property type="match status" value="1"/>
</dbReference>
<dbReference type="InterPro" id="IPR004843">
    <property type="entry name" value="Calcineurin-like_PHP_ApaH"/>
</dbReference>
<dbReference type="InterPro" id="IPR043461">
    <property type="entry name" value="LpxH-like"/>
</dbReference>
<dbReference type="InterPro" id="IPR029052">
    <property type="entry name" value="Metallo-depent_PP-like"/>
</dbReference>
<dbReference type="InterPro" id="IPR010138">
    <property type="entry name" value="UDP-diacylglucosamine_Hdrlase"/>
</dbReference>
<dbReference type="NCBIfam" id="TIGR01854">
    <property type="entry name" value="lipid_A_lpxH"/>
    <property type="match status" value="1"/>
</dbReference>
<dbReference type="NCBIfam" id="NF003743">
    <property type="entry name" value="PRK05340.1"/>
    <property type="match status" value="1"/>
</dbReference>
<dbReference type="PANTHER" id="PTHR34990:SF1">
    <property type="entry name" value="UDP-2,3-DIACYLGLUCOSAMINE HYDROLASE"/>
    <property type="match status" value="1"/>
</dbReference>
<dbReference type="PANTHER" id="PTHR34990">
    <property type="entry name" value="UDP-2,3-DIACYLGLUCOSAMINE HYDROLASE-RELATED"/>
    <property type="match status" value="1"/>
</dbReference>
<dbReference type="Pfam" id="PF00149">
    <property type="entry name" value="Metallophos"/>
    <property type="match status" value="1"/>
</dbReference>
<dbReference type="SUPFAM" id="SSF56300">
    <property type="entry name" value="Metallo-dependent phosphatases"/>
    <property type="match status" value="1"/>
</dbReference>
<protein>
    <recommendedName>
        <fullName evidence="1">UDP-2,3-diacylglucosamine hydrolase</fullName>
        <ecNumber evidence="1">3.6.1.54</ecNumber>
    </recommendedName>
    <alternativeName>
        <fullName evidence="1">UDP-2,3-diacylglucosamine diphosphatase</fullName>
    </alternativeName>
</protein>
<name>LPXH_PSEE4</name>
<keyword id="KW-0997">Cell inner membrane</keyword>
<keyword id="KW-1003">Cell membrane</keyword>
<keyword id="KW-0378">Hydrolase</keyword>
<keyword id="KW-0441">Lipid A biosynthesis</keyword>
<keyword id="KW-0444">Lipid biosynthesis</keyword>
<keyword id="KW-0443">Lipid metabolism</keyword>
<keyword id="KW-0464">Manganese</keyword>
<keyword id="KW-0472">Membrane</keyword>
<keyword id="KW-0479">Metal-binding</keyword>
<reference key="1">
    <citation type="journal article" date="2006" name="Nat. Biotechnol.">
        <title>Complete genome sequence of the entomopathogenic and metabolically versatile soil bacterium Pseudomonas entomophila.</title>
        <authorList>
            <person name="Vodovar N."/>
            <person name="Vallenet D."/>
            <person name="Cruveiller S."/>
            <person name="Rouy Z."/>
            <person name="Barbe V."/>
            <person name="Acosta C."/>
            <person name="Cattolico L."/>
            <person name="Jubin C."/>
            <person name="Lajus A."/>
            <person name="Segurens B."/>
            <person name="Vacherie B."/>
            <person name="Wincker P."/>
            <person name="Weissenbach J."/>
            <person name="Lemaitre B."/>
            <person name="Medigue C."/>
            <person name="Boccard F."/>
        </authorList>
    </citation>
    <scope>NUCLEOTIDE SEQUENCE [LARGE SCALE GENOMIC DNA]</scope>
    <source>
        <strain>L48</strain>
    </source>
</reference>
<sequence length="240" mass="27262">MILLISDLHLQEERPDITRAFLDLLDGRARHAKALYILGDFFEAWIGDDAMTPFQRSICQALRQLSDSGTTIYLMHGNRDFLIGQAFCQAAGCTLLDDPSVIELGGEAVLLMHGDTLCTRDVGYMKLRRYLRNPLSLWILRHLPLSTRQKLARKLRSESKSQTRMKNTEIVDVTPDEVPKVMAAHGVRTLVHGHTHRPAIHKLVIDGQPARRIVLGDWDRRGWALQVDEQGFQLAPFEFS</sequence>